<keyword id="KW-0028">Amino-acid biosynthesis</keyword>
<keyword id="KW-0057">Aromatic amino acid biosynthesis</keyword>
<keyword id="KW-0456">Lyase</keyword>
<keyword id="KW-0822">Tryptophan biosynthesis</keyword>
<organism>
    <name type="scientific">Shigella flexneri serotype 5b (strain 8401)</name>
    <dbReference type="NCBI Taxonomy" id="373384"/>
    <lineage>
        <taxon>Bacteria</taxon>
        <taxon>Pseudomonadati</taxon>
        <taxon>Pseudomonadota</taxon>
        <taxon>Gammaproteobacteria</taxon>
        <taxon>Enterobacterales</taxon>
        <taxon>Enterobacteriaceae</taxon>
        <taxon>Shigella</taxon>
    </lineage>
</organism>
<dbReference type="EC" id="4.2.1.20" evidence="1"/>
<dbReference type="EMBL" id="CP000266">
    <property type="protein sequence ID" value="ABF03479.1"/>
    <property type="molecule type" value="Genomic_DNA"/>
</dbReference>
<dbReference type="RefSeq" id="WP_000443061.1">
    <property type="nucleotide sequence ID" value="NC_008258.1"/>
</dbReference>
<dbReference type="SMR" id="Q0T5D6"/>
<dbReference type="KEGG" id="sfv:SFV_1274"/>
<dbReference type="HOGENOM" id="CLU_016734_0_4_6"/>
<dbReference type="UniPathway" id="UPA00035">
    <property type="reaction ID" value="UER00044"/>
</dbReference>
<dbReference type="Proteomes" id="UP000000659">
    <property type="component" value="Chromosome"/>
</dbReference>
<dbReference type="GO" id="GO:0005829">
    <property type="term" value="C:cytosol"/>
    <property type="evidence" value="ECO:0007669"/>
    <property type="project" value="TreeGrafter"/>
</dbReference>
<dbReference type="GO" id="GO:0004834">
    <property type="term" value="F:tryptophan synthase activity"/>
    <property type="evidence" value="ECO:0007669"/>
    <property type="project" value="UniProtKB-UniRule"/>
</dbReference>
<dbReference type="CDD" id="cd04724">
    <property type="entry name" value="Tryptophan_synthase_alpha"/>
    <property type="match status" value="1"/>
</dbReference>
<dbReference type="FunFam" id="3.20.20.70:FF:000037">
    <property type="entry name" value="Tryptophan synthase alpha chain"/>
    <property type="match status" value="1"/>
</dbReference>
<dbReference type="Gene3D" id="3.20.20.70">
    <property type="entry name" value="Aldolase class I"/>
    <property type="match status" value="1"/>
</dbReference>
<dbReference type="HAMAP" id="MF_00131">
    <property type="entry name" value="Trp_synth_alpha"/>
    <property type="match status" value="1"/>
</dbReference>
<dbReference type="InterPro" id="IPR013785">
    <property type="entry name" value="Aldolase_TIM"/>
</dbReference>
<dbReference type="InterPro" id="IPR011060">
    <property type="entry name" value="RibuloseP-bd_barrel"/>
</dbReference>
<dbReference type="InterPro" id="IPR018204">
    <property type="entry name" value="Trp_synthase_alpha_AS"/>
</dbReference>
<dbReference type="InterPro" id="IPR002028">
    <property type="entry name" value="Trp_synthase_suA"/>
</dbReference>
<dbReference type="NCBIfam" id="TIGR00262">
    <property type="entry name" value="trpA"/>
    <property type="match status" value="1"/>
</dbReference>
<dbReference type="PANTHER" id="PTHR43406:SF1">
    <property type="entry name" value="TRYPTOPHAN SYNTHASE ALPHA CHAIN, CHLOROPLASTIC"/>
    <property type="match status" value="1"/>
</dbReference>
<dbReference type="PANTHER" id="PTHR43406">
    <property type="entry name" value="TRYPTOPHAN SYNTHASE, ALPHA CHAIN"/>
    <property type="match status" value="1"/>
</dbReference>
<dbReference type="Pfam" id="PF00290">
    <property type="entry name" value="Trp_syntA"/>
    <property type="match status" value="1"/>
</dbReference>
<dbReference type="SUPFAM" id="SSF51366">
    <property type="entry name" value="Ribulose-phoshate binding barrel"/>
    <property type="match status" value="1"/>
</dbReference>
<dbReference type="PROSITE" id="PS00167">
    <property type="entry name" value="TRP_SYNTHASE_ALPHA"/>
    <property type="match status" value="1"/>
</dbReference>
<sequence length="268" mass="28671">MERYESLFAQLKERKEGAFVPFVTLGDPGIEQSLKIIDTLIEAGADALELGIPFSDPLADGPTIQNATLRAFAAGVTPAQCFEMLALIRQKHPTIPIGLLMYANLVFNKGIDEFYAQCEKVGVDSVLVADVPVEESAPFRQAALCHNVAPIFICPPNADDDLLRQIASYGRGYTYLLSRAGVTGAENRAALPLNHLVAKLKEYNAAPPLQGFGISAPDQVKAAIDAGAAGAISGSAIVKIIEQHINEPEKMLAALKVFVQPMKAATRS</sequence>
<name>TRPA_SHIF8</name>
<comment type="function">
    <text evidence="1">The alpha subunit is responsible for the aldol cleavage of indoleglycerol phosphate to indole and glyceraldehyde 3-phosphate.</text>
</comment>
<comment type="catalytic activity">
    <reaction evidence="1">
        <text>(1S,2R)-1-C-(indol-3-yl)glycerol 3-phosphate + L-serine = D-glyceraldehyde 3-phosphate + L-tryptophan + H2O</text>
        <dbReference type="Rhea" id="RHEA:10532"/>
        <dbReference type="ChEBI" id="CHEBI:15377"/>
        <dbReference type="ChEBI" id="CHEBI:33384"/>
        <dbReference type="ChEBI" id="CHEBI:57912"/>
        <dbReference type="ChEBI" id="CHEBI:58866"/>
        <dbReference type="ChEBI" id="CHEBI:59776"/>
        <dbReference type="EC" id="4.2.1.20"/>
    </reaction>
</comment>
<comment type="pathway">
    <text evidence="1">Amino-acid biosynthesis; L-tryptophan biosynthesis; L-tryptophan from chorismate: step 5/5.</text>
</comment>
<comment type="subunit">
    <text evidence="1">Tetramer of two alpha and two beta chains.</text>
</comment>
<comment type="similarity">
    <text evidence="1">Belongs to the TrpA family.</text>
</comment>
<proteinExistence type="inferred from homology"/>
<evidence type="ECO:0000255" key="1">
    <source>
        <dbReference type="HAMAP-Rule" id="MF_00131"/>
    </source>
</evidence>
<gene>
    <name evidence="1" type="primary">trpA</name>
    <name type="ordered locus">SFV_1274</name>
</gene>
<feature type="chain" id="PRO_1000018282" description="Tryptophan synthase alpha chain">
    <location>
        <begin position="1"/>
        <end position="268"/>
    </location>
</feature>
<feature type="active site" description="Proton acceptor" evidence="1">
    <location>
        <position position="49"/>
    </location>
</feature>
<feature type="active site" description="Proton acceptor" evidence="1">
    <location>
        <position position="60"/>
    </location>
</feature>
<accession>Q0T5D6</accession>
<reference key="1">
    <citation type="journal article" date="2006" name="BMC Genomics">
        <title>Complete genome sequence of Shigella flexneri 5b and comparison with Shigella flexneri 2a.</title>
        <authorList>
            <person name="Nie H."/>
            <person name="Yang F."/>
            <person name="Zhang X."/>
            <person name="Yang J."/>
            <person name="Chen L."/>
            <person name="Wang J."/>
            <person name="Xiong Z."/>
            <person name="Peng J."/>
            <person name="Sun L."/>
            <person name="Dong J."/>
            <person name="Xue Y."/>
            <person name="Xu X."/>
            <person name="Chen S."/>
            <person name="Yao Z."/>
            <person name="Shen Y."/>
            <person name="Jin Q."/>
        </authorList>
    </citation>
    <scope>NUCLEOTIDE SEQUENCE [LARGE SCALE GENOMIC DNA]</scope>
    <source>
        <strain>8401</strain>
    </source>
</reference>
<protein>
    <recommendedName>
        <fullName evidence="1">Tryptophan synthase alpha chain</fullName>
        <ecNumber evidence="1">4.2.1.20</ecNumber>
    </recommendedName>
</protein>